<reference key="1">
    <citation type="journal article" date="1997" name="Nature">
        <title>The complete genome sequence of the Gram-positive bacterium Bacillus subtilis.</title>
        <authorList>
            <person name="Kunst F."/>
            <person name="Ogasawara N."/>
            <person name="Moszer I."/>
            <person name="Albertini A.M."/>
            <person name="Alloni G."/>
            <person name="Azevedo V."/>
            <person name="Bertero M.G."/>
            <person name="Bessieres P."/>
            <person name="Bolotin A."/>
            <person name="Borchert S."/>
            <person name="Borriss R."/>
            <person name="Boursier L."/>
            <person name="Brans A."/>
            <person name="Braun M."/>
            <person name="Brignell S.C."/>
            <person name="Bron S."/>
            <person name="Brouillet S."/>
            <person name="Bruschi C.V."/>
            <person name="Caldwell B."/>
            <person name="Capuano V."/>
            <person name="Carter N.M."/>
            <person name="Choi S.-K."/>
            <person name="Codani J.-J."/>
            <person name="Connerton I.F."/>
            <person name="Cummings N.J."/>
            <person name="Daniel R.A."/>
            <person name="Denizot F."/>
            <person name="Devine K.M."/>
            <person name="Duesterhoeft A."/>
            <person name="Ehrlich S.D."/>
            <person name="Emmerson P.T."/>
            <person name="Entian K.-D."/>
            <person name="Errington J."/>
            <person name="Fabret C."/>
            <person name="Ferrari E."/>
            <person name="Foulger D."/>
            <person name="Fritz C."/>
            <person name="Fujita M."/>
            <person name="Fujita Y."/>
            <person name="Fuma S."/>
            <person name="Galizzi A."/>
            <person name="Galleron N."/>
            <person name="Ghim S.-Y."/>
            <person name="Glaser P."/>
            <person name="Goffeau A."/>
            <person name="Golightly E.J."/>
            <person name="Grandi G."/>
            <person name="Guiseppi G."/>
            <person name="Guy B.J."/>
            <person name="Haga K."/>
            <person name="Haiech J."/>
            <person name="Harwood C.R."/>
            <person name="Henaut A."/>
            <person name="Hilbert H."/>
            <person name="Holsappel S."/>
            <person name="Hosono S."/>
            <person name="Hullo M.-F."/>
            <person name="Itaya M."/>
            <person name="Jones L.-M."/>
            <person name="Joris B."/>
            <person name="Karamata D."/>
            <person name="Kasahara Y."/>
            <person name="Klaerr-Blanchard M."/>
            <person name="Klein C."/>
            <person name="Kobayashi Y."/>
            <person name="Koetter P."/>
            <person name="Koningstein G."/>
            <person name="Krogh S."/>
            <person name="Kumano M."/>
            <person name="Kurita K."/>
            <person name="Lapidus A."/>
            <person name="Lardinois S."/>
            <person name="Lauber J."/>
            <person name="Lazarevic V."/>
            <person name="Lee S.-M."/>
            <person name="Levine A."/>
            <person name="Liu H."/>
            <person name="Masuda S."/>
            <person name="Mauel C."/>
            <person name="Medigue C."/>
            <person name="Medina N."/>
            <person name="Mellado R.P."/>
            <person name="Mizuno M."/>
            <person name="Moestl D."/>
            <person name="Nakai S."/>
            <person name="Noback M."/>
            <person name="Noone D."/>
            <person name="O'Reilly M."/>
            <person name="Ogawa K."/>
            <person name="Ogiwara A."/>
            <person name="Oudega B."/>
            <person name="Park S.-H."/>
            <person name="Parro V."/>
            <person name="Pohl T.M."/>
            <person name="Portetelle D."/>
            <person name="Porwollik S."/>
            <person name="Prescott A.M."/>
            <person name="Presecan E."/>
            <person name="Pujic P."/>
            <person name="Purnelle B."/>
            <person name="Rapoport G."/>
            <person name="Rey M."/>
            <person name="Reynolds S."/>
            <person name="Rieger M."/>
            <person name="Rivolta C."/>
            <person name="Rocha E."/>
            <person name="Roche B."/>
            <person name="Rose M."/>
            <person name="Sadaie Y."/>
            <person name="Sato T."/>
            <person name="Scanlan E."/>
            <person name="Schleich S."/>
            <person name="Schroeter R."/>
            <person name="Scoffone F."/>
            <person name="Sekiguchi J."/>
            <person name="Sekowska A."/>
            <person name="Seror S.J."/>
            <person name="Serror P."/>
            <person name="Shin B.-S."/>
            <person name="Soldo B."/>
            <person name="Sorokin A."/>
            <person name="Tacconi E."/>
            <person name="Takagi T."/>
            <person name="Takahashi H."/>
            <person name="Takemaru K."/>
            <person name="Takeuchi M."/>
            <person name="Tamakoshi A."/>
            <person name="Tanaka T."/>
            <person name="Terpstra P."/>
            <person name="Tognoni A."/>
            <person name="Tosato V."/>
            <person name="Uchiyama S."/>
            <person name="Vandenbol M."/>
            <person name="Vannier F."/>
            <person name="Vassarotti A."/>
            <person name="Viari A."/>
            <person name="Wambutt R."/>
            <person name="Wedler E."/>
            <person name="Wedler H."/>
            <person name="Weitzenegger T."/>
            <person name="Winters P."/>
            <person name="Wipat A."/>
            <person name="Yamamoto H."/>
            <person name="Yamane K."/>
            <person name="Yasumoto K."/>
            <person name="Yata K."/>
            <person name="Yoshida K."/>
            <person name="Yoshikawa H.-F."/>
            <person name="Zumstein E."/>
            <person name="Yoshikawa H."/>
            <person name="Danchin A."/>
        </authorList>
    </citation>
    <scope>NUCLEOTIDE SEQUENCE [LARGE SCALE GENOMIC DNA]</scope>
    <source>
        <strain>168</strain>
    </source>
</reference>
<gene>
    <name type="primary">yjcP</name>
    <name type="ordered locus">BSU11940</name>
</gene>
<proteinExistence type="predicted"/>
<keyword id="KW-1003">Cell membrane</keyword>
<keyword id="KW-0472">Membrane</keyword>
<keyword id="KW-1185">Reference proteome</keyword>
<keyword id="KW-0812">Transmembrane</keyword>
<keyword id="KW-1133">Transmembrane helix</keyword>
<dbReference type="EMBL" id="AL009126">
    <property type="protein sequence ID" value="CAB13051.1"/>
    <property type="molecule type" value="Genomic_DNA"/>
</dbReference>
<dbReference type="PIR" id="H69847">
    <property type="entry name" value="H69847"/>
</dbReference>
<dbReference type="RefSeq" id="NP_389076.1">
    <property type="nucleotide sequence ID" value="NC_000964.3"/>
</dbReference>
<dbReference type="RefSeq" id="WP_003245581.1">
    <property type="nucleotide sequence ID" value="NZ_OZ025638.1"/>
</dbReference>
<dbReference type="FunCoup" id="O31638">
    <property type="interactions" value="52"/>
</dbReference>
<dbReference type="STRING" id="224308.BSU11940"/>
<dbReference type="PaxDb" id="224308-BSU11940"/>
<dbReference type="EnsemblBacteria" id="CAB13051">
    <property type="protein sequence ID" value="CAB13051"/>
    <property type="gene ID" value="BSU_11940"/>
</dbReference>
<dbReference type="GeneID" id="936429"/>
<dbReference type="KEGG" id="bsu:BSU11940"/>
<dbReference type="PATRIC" id="fig|224308.179.peg.1289"/>
<dbReference type="eggNOG" id="ENOG5030E2G">
    <property type="taxonomic scope" value="Bacteria"/>
</dbReference>
<dbReference type="InParanoid" id="O31638"/>
<dbReference type="OrthoDB" id="2931714at2"/>
<dbReference type="BioCyc" id="BSUB:BSU11940-MONOMER"/>
<dbReference type="Proteomes" id="UP000001570">
    <property type="component" value="Chromosome"/>
</dbReference>
<dbReference type="GO" id="GO:0005886">
    <property type="term" value="C:plasma membrane"/>
    <property type="evidence" value="ECO:0007669"/>
    <property type="project" value="UniProtKB-SubCell"/>
</dbReference>
<evidence type="ECO:0000255" key="1"/>
<evidence type="ECO:0000305" key="2"/>
<sequence>MKKQKNNKKKNIEKRNIEKRNIEEKNNEDLEELENAIYTYHKKELLAFFLEKTRIGHDKEEYKRFQSLLYKLDIECLEFAISRFSHIDIIHDHSKYVPAFIPLFAAYLTMFFNFYEKHWGALSFAAGTIAAIVWIIAVERKHRNQAISIMKIFEQVKERKVKDRSKD</sequence>
<name>YJCP_BACSU</name>
<protein>
    <recommendedName>
        <fullName>Uncharacterized protein YjcP</fullName>
    </recommendedName>
</protein>
<accession>O31638</accession>
<organism>
    <name type="scientific">Bacillus subtilis (strain 168)</name>
    <dbReference type="NCBI Taxonomy" id="224308"/>
    <lineage>
        <taxon>Bacteria</taxon>
        <taxon>Bacillati</taxon>
        <taxon>Bacillota</taxon>
        <taxon>Bacilli</taxon>
        <taxon>Bacillales</taxon>
        <taxon>Bacillaceae</taxon>
        <taxon>Bacillus</taxon>
    </lineage>
</organism>
<feature type="chain" id="PRO_0000049596" description="Uncharacterized protein YjcP">
    <location>
        <begin position="1"/>
        <end position="167"/>
    </location>
</feature>
<feature type="transmembrane region" description="Helical" evidence="1">
    <location>
        <begin position="96"/>
        <end position="115"/>
    </location>
</feature>
<feature type="transmembrane region" description="Helical" evidence="1">
    <location>
        <begin position="119"/>
        <end position="138"/>
    </location>
</feature>
<comment type="subcellular location">
    <subcellularLocation>
        <location evidence="2">Cell membrane</location>
        <topology evidence="2">Multi-pass membrane protein</topology>
    </subcellularLocation>
</comment>